<protein>
    <recommendedName>
        <fullName>Spindle pole body component SPC42</fullName>
    </recommendedName>
</protein>
<reference key="1">
    <citation type="journal article" date="2007" name="Proc. Natl. Acad. Sci. U.S.A.">
        <title>Independent sorting-out of thousands of duplicated gene pairs in two yeast species descended from a whole-genome duplication.</title>
        <authorList>
            <person name="Scannell D.R."/>
            <person name="Frank A.C."/>
            <person name="Conant G.C."/>
            <person name="Byrne K.P."/>
            <person name="Woolfit M."/>
            <person name="Wolfe K.H."/>
        </authorList>
    </citation>
    <scope>NUCLEOTIDE SEQUENCE [LARGE SCALE GENOMIC DNA]</scope>
    <source>
        <strain>ATCC 22028 / DSM 70294 / BCRC 21397 / CBS 2163 / NBRC 10782 / NRRL Y-8283 / UCD 57-17</strain>
    </source>
</reference>
<organism>
    <name type="scientific">Vanderwaltozyma polyspora (strain ATCC 22028 / DSM 70294 / BCRC 21397 / CBS 2163 / NBRC 10782 / NRRL Y-8283 / UCD 57-17)</name>
    <name type="common">Kluyveromyces polysporus</name>
    <dbReference type="NCBI Taxonomy" id="436907"/>
    <lineage>
        <taxon>Eukaryota</taxon>
        <taxon>Fungi</taxon>
        <taxon>Dikarya</taxon>
        <taxon>Ascomycota</taxon>
        <taxon>Saccharomycotina</taxon>
        <taxon>Saccharomycetes</taxon>
        <taxon>Saccharomycetales</taxon>
        <taxon>Saccharomycetaceae</taxon>
        <taxon>Vanderwaltozyma</taxon>
    </lineage>
</organism>
<feature type="chain" id="PRO_0000409211" description="Spindle pole body component SPC42">
    <location>
        <begin position="1"/>
        <end position="361"/>
    </location>
</feature>
<feature type="region of interest" description="Disordered" evidence="3">
    <location>
        <begin position="1"/>
        <end position="24"/>
    </location>
</feature>
<feature type="region of interest" description="Disordered" evidence="3">
    <location>
        <begin position="189"/>
        <end position="219"/>
    </location>
</feature>
<feature type="region of interest" description="Disordered" evidence="3">
    <location>
        <begin position="308"/>
        <end position="361"/>
    </location>
</feature>
<feature type="coiled-coil region" evidence="2">
    <location>
        <begin position="61"/>
        <end position="125"/>
    </location>
</feature>
<feature type="coiled-coil region" evidence="2">
    <location>
        <begin position="169"/>
        <end position="270"/>
    </location>
</feature>
<feature type="compositionally biased region" description="Polar residues" evidence="3">
    <location>
        <begin position="12"/>
        <end position="24"/>
    </location>
</feature>
<feature type="compositionally biased region" description="Low complexity" evidence="3">
    <location>
        <begin position="193"/>
        <end position="208"/>
    </location>
</feature>
<feature type="compositionally biased region" description="Low complexity" evidence="3">
    <location>
        <begin position="311"/>
        <end position="328"/>
    </location>
</feature>
<feature type="compositionally biased region" description="Basic and acidic residues" evidence="3">
    <location>
        <begin position="334"/>
        <end position="343"/>
    </location>
</feature>
<name>SPC42_VANPO</name>
<gene>
    <name type="primary">SPC42</name>
    <name type="ORF">Kpol_460p24</name>
</gene>
<dbReference type="EMBL" id="DS480463">
    <property type="protein sequence ID" value="EDO15389.1"/>
    <property type="molecule type" value="Genomic_DNA"/>
</dbReference>
<dbReference type="RefSeq" id="XP_001643247.1">
    <property type="nucleotide sequence ID" value="XM_001643197.1"/>
</dbReference>
<dbReference type="SMR" id="A7TQU0"/>
<dbReference type="FunCoup" id="A7TQU0">
    <property type="interactions" value="209"/>
</dbReference>
<dbReference type="STRING" id="436907.A7TQU0"/>
<dbReference type="GeneID" id="5543451"/>
<dbReference type="KEGG" id="vpo:Kpol_460p24"/>
<dbReference type="eggNOG" id="ENOG502RYX7">
    <property type="taxonomic scope" value="Eukaryota"/>
</dbReference>
<dbReference type="HOGENOM" id="CLU_056211_0_0_1"/>
<dbReference type="InParanoid" id="A7TQU0"/>
<dbReference type="OMA" id="HNHATHR"/>
<dbReference type="OrthoDB" id="4061426at2759"/>
<dbReference type="PhylomeDB" id="A7TQU0"/>
<dbReference type="Proteomes" id="UP000000267">
    <property type="component" value="Unassembled WGS sequence"/>
</dbReference>
<dbReference type="GO" id="GO:0005823">
    <property type="term" value="C:central plaque of spindle pole body"/>
    <property type="evidence" value="ECO:0007669"/>
    <property type="project" value="EnsemblFungi"/>
</dbReference>
<dbReference type="GO" id="GO:0005737">
    <property type="term" value="C:cytoplasm"/>
    <property type="evidence" value="ECO:0007669"/>
    <property type="project" value="UniProtKB-KW"/>
</dbReference>
<dbReference type="GO" id="GO:0005821">
    <property type="term" value="C:intermediate layer of spindle pole body"/>
    <property type="evidence" value="ECO:0007669"/>
    <property type="project" value="EnsemblFungi"/>
</dbReference>
<dbReference type="GO" id="GO:0005634">
    <property type="term" value="C:nucleus"/>
    <property type="evidence" value="ECO:0007669"/>
    <property type="project" value="UniProtKB-SubCell"/>
</dbReference>
<dbReference type="GO" id="GO:0005200">
    <property type="term" value="F:structural constituent of cytoskeleton"/>
    <property type="evidence" value="ECO:0007669"/>
    <property type="project" value="EnsemblFungi"/>
</dbReference>
<dbReference type="GO" id="GO:0030474">
    <property type="term" value="P:spindle pole body duplication"/>
    <property type="evidence" value="ECO:0007669"/>
    <property type="project" value="EnsemblFungi"/>
</dbReference>
<dbReference type="Gene3D" id="1.20.5.1180">
    <property type="entry name" value="Geminin coiled-coil domain"/>
    <property type="match status" value="1"/>
</dbReference>
<dbReference type="InterPro" id="IPR021611">
    <property type="entry name" value="Spc42"/>
</dbReference>
<dbReference type="Pfam" id="PF11544">
    <property type="entry name" value="Spc42p"/>
    <property type="match status" value="1"/>
</dbReference>
<evidence type="ECO:0000250" key="1"/>
<evidence type="ECO:0000255" key="2"/>
<evidence type="ECO:0000256" key="3">
    <source>
        <dbReference type="SAM" id="MobiDB-lite"/>
    </source>
</evidence>
<evidence type="ECO:0000305" key="4"/>
<sequence length="361" mass="41196">MNISPTPKRYSSARSNRNENNIPSMYSDPLYNDNMNQGGGIGHLGGPRNIGNVPTEKIVPEEYRLNSQMINRLIKQNKELNNKLNSKQDEINRLNSLVGSLRAKLIKYTELNKKLNSDLQNFQNSEIINNSITEDVNDYIQVPKKRSVTLGTSPDSMSTPTILKNSHPVDEKINKLNDKLDKLTNLVLEEKSSQSTTSNKSTTPPVTSQPNLFFSKGPSDEDIMVKESVELKNLEDQIDSLKRKLLIKRENELRKISLNQELLELMDKLNLQNPSNAQQNFNNFDISPPLSRSNNESPEYCLECHNRHTSHSQSHNNHNISNKQQNSQYHHQHQKESYLKKPDLPISNPLDTPTPLNKRPT</sequence>
<accession>A7TQU0</accession>
<comment type="function">
    <text evidence="1">Forms a polymeric layer at the periphery of the spindle pole body (SPB) central plaque which has an essential function during SPB duplication and may facilitate attachment of the SPB to the nuclear membrane.</text>
</comment>
<comment type="subcellular location">
    <subcellularLocation>
        <location evidence="1">Nucleus</location>
    </subcellularLocation>
    <subcellularLocation>
        <location evidence="1">Cytoplasm</location>
        <location evidence="1">Cytoskeleton</location>
        <location evidence="1">Microtubule organizing center</location>
        <location evidence="1">Spindle pole body</location>
    </subcellularLocation>
</comment>
<comment type="similarity">
    <text evidence="4">Belongs to the SPC42 family.</text>
</comment>
<proteinExistence type="inferred from homology"/>
<keyword id="KW-0175">Coiled coil</keyword>
<keyword id="KW-0963">Cytoplasm</keyword>
<keyword id="KW-0206">Cytoskeleton</keyword>
<keyword id="KW-0539">Nucleus</keyword>
<keyword id="KW-1185">Reference proteome</keyword>